<keyword id="KW-0227">DNA damage</keyword>
<keyword id="KW-0233">DNA recombination</keyword>
<keyword id="KW-0234">DNA repair</keyword>
<keyword id="KW-0479">Metal-binding</keyword>
<keyword id="KW-1185">Reference proteome</keyword>
<keyword id="KW-0862">Zinc</keyword>
<keyword id="KW-0863">Zinc-finger</keyword>
<organism>
    <name type="scientific">Photobacterium profundum (strain SS9)</name>
    <dbReference type="NCBI Taxonomy" id="298386"/>
    <lineage>
        <taxon>Bacteria</taxon>
        <taxon>Pseudomonadati</taxon>
        <taxon>Pseudomonadota</taxon>
        <taxon>Gammaproteobacteria</taxon>
        <taxon>Vibrionales</taxon>
        <taxon>Vibrionaceae</taxon>
        <taxon>Photobacterium</taxon>
    </lineage>
</organism>
<gene>
    <name evidence="1" type="primary">recR</name>
    <name type="ordered locus">PBPRA1019</name>
</gene>
<accession>Q6LTE6</accession>
<evidence type="ECO:0000255" key="1">
    <source>
        <dbReference type="HAMAP-Rule" id="MF_00017"/>
    </source>
</evidence>
<comment type="function">
    <text evidence="1">May play a role in DNA repair. It seems to be involved in an RecBC-independent recombinational process of DNA repair. It may act with RecF and RecO.</text>
</comment>
<comment type="similarity">
    <text evidence="1">Belongs to the RecR family.</text>
</comment>
<dbReference type="EMBL" id="CR378666">
    <property type="protein sequence ID" value="CAG19430.1"/>
    <property type="molecule type" value="Genomic_DNA"/>
</dbReference>
<dbReference type="RefSeq" id="WP_011217764.1">
    <property type="nucleotide sequence ID" value="NC_006370.1"/>
</dbReference>
<dbReference type="SMR" id="Q6LTE6"/>
<dbReference type="STRING" id="298386.PBPRA1019"/>
<dbReference type="KEGG" id="ppr:PBPRA1019"/>
<dbReference type="eggNOG" id="COG0353">
    <property type="taxonomic scope" value="Bacteria"/>
</dbReference>
<dbReference type="HOGENOM" id="CLU_060739_1_2_6"/>
<dbReference type="Proteomes" id="UP000000593">
    <property type="component" value="Chromosome 1"/>
</dbReference>
<dbReference type="GO" id="GO:0003677">
    <property type="term" value="F:DNA binding"/>
    <property type="evidence" value="ECO:0007669"/>
    <property type="project" value="UniProtKB-UniRule"/>
</dbReference>
<dbReference type="GO" id="GO:0008270">
    <property type="term" value="F:zinc ion binding"/>
    <property type="evidence" value="ECO:0007669"/>
    <property type="project" value="UniProtKB-KW"/>
</dbReference>
<dbReference type="GO" id="GO:0006310">
    <property type="term" value="P:DNA recombination"/>
    <property type="evidence" value="ECO:0007669"/>
    <property type="project" value="UniProtKB-UniRule"/>
</dbReference>
<dbReference type="GO" id="GO:0006281">
    <property type="term" value="P:DNA repair"/>
    <property type="evidence" value="ECO:0007669"/>
    <property type="project" value="UniProtKB-UniRule"/>
</dbReference>
<dbReference type="CDD" id="cd01025">
    <property type="entry name" value="TOPRIM_recR"/>
    <property type="match status" value="1"/>
</dbReference>
<dbReference type="FunFam" id="1.10.8.420:FF:000001">
    <property type="entry name" value="Recombination protein RecR"/>
    <property type="match status" value="1"/>
</dbReference>
<dbReference type="FunFam" id="3.40.1360.10:FF:000001">
    <property type="entry name" value="Recombination protein RecR"/>
    <property type="match status" value="1"/>
</dbReference>
<dbReference type="Gene3D" id="3.40.1360.10">
    <property type="match status" value="1"/>
</dbReference>
<dbReference type="Gene3D" id="6.10.250.240">
    <property type="match status" value="1"/>
</dbReference>
<dbReference type="Gene3D" id="1.10.8.420">
    <property type="entry name" value="RecR Domain 1"/>
    <property type="match status" value="1"/>
</dbReference>
<dbReference type="HAMAP" id="MF_00017">
    <property type="entry name" value="RecR"/>
    <property type="match status" value="1"/>
</dbReference>
<dbReference type="InterPro" id="IPR000093">
    <property type="entry name" value="DNA_Rcmb_RecR"/>
</dbReference>
<dbReference type="InterPro" id="IPR023627">
    <property type="entry name" value="Rcmb_RecR"/>
</dbReference>
<dbReference type="InterPro" id="IPR015967">
    <property type="entry name" value="Rcmb_RecR_Znf"/>
</dbReference>
<dbReference type="InterPro" id="IPR006171">
    <property type="entry name" value="TOPRIM_dom"/>
</dbReference>
<dbReference type="InterPro" id="IPR034137">
    <property type="entry name" value="TOPRIM_RecR"/>
</dbReference>
<dbReference type="NCBIfam" id="TIGR00615">
    <property type="entry name" value="recR"/>
    <property type="match status" value="1"/>
</dbReference>
<dbReference type="PANTHER" id="PTHR30446">
    <property type="entry name" value="RECOMBINATION PROTEIN RECR"/>
    <property type="match status" value="1"/>
</dbReference>
<dbReference type="PANTHER" id="PTHR30446:SF0">
    <property type="entry name" value="RECOMBINATION PROTEIN RECR"/>
    <property type="match status" value="1"/>
</dbReference>
<dbReference type="Pfam" id="PF21175">
    <property type="entry name" value="RecR_C"/>
    <property type="match status" value="1"/>
</dbReference>
<dbReference type="Pfam" id="PF21176">
    <property type="entry name" value="RecR_HhH"/>
    <property type="match status" value="1"/>
</dbReference>
<dbReference type="Pfam" id="PF02132">
    <property type="entry name" value="RecR_ZnF"/>
    <property type="match status" value="1"/>
</dbReference>
<dbReference type="Pfam" id="PF13662">
    <property type="entry name" value="Toprim_4"/>
    <property type="match status" value="1"/>
</dbReference>
<dbReference type="SMART" id="SM00493">
    <property type="entry name" value="TOPRIM"/>
    <property type="match status" value="1"/>
</dbReference>
<dbReference type="SUPFAM" id="SSF111304">
    <property type="entry name" value="Recombination protein RecR"/>
    <property type="match status" value="1"/>
</dbReference>
<dbReference type="PROSITE" id="PS01300">
    <property type="entry name" value="RECR"/>
    <property type="match status" value="1"/>
</dbReference>
<dbReference type="PROSITE" id="PS50880">
    <property type="entry name" value="TOPRIM"/>
    <property type="match status" value="1"/>
</dbReference>
<reference key="1">
    <citation type="journal article" date="2005" name="Science">
        <title>Life at depth: Photobacterium profundum genome sequence and expression analysis.</title>
        <authorList>
            <person name="Vezzi A."/>
            <person name="Campanaro S."/>
            <person name="D'Angelo M."/>
            <person name="Simonato F."/>
            <person name="Vitulo N."/>
            <person name="Lauro F.M."/>
            <person name="Cestaro A."/>
            <person name="Malacrida G."/>
            <person name="Simionati B."/>
            <person name="Cannata N."/>
            <person name="Romualdi C."/>
            <person name="Bartlett D.H."/>
            <person name="Valle G."/>
        </authorList>
    </citation>
    <scope>NUCLEOTIDE SEQUENCE [LARGE SCALE GENOMIC DNA]</scope>
    <source>
        <strain>ATCC BAA-1253 / SS9</strain>
    </source>
</reference>
<protein>
    <recommendedName>
        <fullName evidence="1">Recombination protein RecR</fullName>
    </recommendedName>
</protein>
<name>RECR_PHOPR</name>
<sequence>MRTSHLLEQLMEALRCLPGVGPKSAQRMAFNLLQRNRQGGLQLADALNRAMTDIGHCRDCRTFTEDDICAVCANPRRQENGQICVVESPADIVAVESTGQFSGRYFVLMGHLSPLDGIGPSDIGLDTLEFRLQKETIAELILATNPTVEGEATAHYIAELCHEYGVPATRIAHGVPVGGELELVDGTTLSHSLAGRQKLNLY</sequence>
<feature type="chain" id="PRO_0000190361" description="Recombination protein RecR">
    <location>
        <begin position="1"/>
        <end position="202"/>
    </location>
</feature>
<feature type="domain" description="Toprim" evidence="1">
    <location>
        <begin position="81"/>
        <end position="176"/>
    </location>
</feature>
<feature type="zinc finger region" description="C4-type" evidence="1">
    <location>
        <begin position="57"/>
        <end position="72"/>
    </location>
</feature>
<proteinExistence type="inferred from homology"/>